<name>DCD_YERPA</name>
<accession>Q1C9T5</accession>
<gene>
    <name evidence="1" type="primary">dcd</name>
    <name type="ordered locus">YPA_0819</name>
</gene>
<organism>
    <name type="scientific">Yersinia pestis bv. Antiqua (strain Antiqua)</name>
    <dbReference type="NCBI Taxonomy" id="360102"/>
    <lineage>
        <taxon>Bacteria</taxon>
        <taxon>Pseudomonadati</taxon>
        <taxon>Pseudomonadota</taxon>
        <taxon>Gammaproteobacteria</taxon>
        <taxon>Enterobacterales</taxon>
        <taxon>Yersiniaceae</taxon>
        <taxon>Yersinia</taxon>
    </lineage>
</organism>
<sequence length="193" mass="21140">MRLCDRDIEAWLDSGKLGIEPRPPVERINGATVDVRLGNQFRVFRGHTAAFIDLSGPKDEVSAALERVMSDEINLPEGEAFFLHPGELALAVTLESVTIPDDLVGWLDGRSSLARLGLMVHVTAHRIDPGWQGRIVLEFYNSGKLPLALRPGMLIGALSFEPLSGPAARPYNSRQDAKYRGQQGAVASRIDKD</sequence>
<comment type="function">
    <text evidence="1">Catalyzes the deamination of dCTP to dUTP.</text>
</comment>
<comment type="catalytic activity">
    <reaction evidence="1">
        <text>dCTP + H2O + H(+) = dUTP + NH4(+)</text>
        <dbReference type="Rhea" id="RHEA:22680"/>
        <dbReference type="ChEBI" id="CHEBI:15377"/>
        <dbReference type="ChEBI" id="CHEBI:15378"/>
        <dbReference type="ChEBI" id="CHEBI:28938"/>
        <dbReference type="ChEBI" id="CHEBI:61481"/>
        <dbReference type="ChEBI" id="CHEBI:61555"/>
        <dbReference type="EC" id="3.5.4.13"/>
    </reaction>
</comment>
<comment type="pathway">
    <text evidence="1">Pyrimidine metabolism; dUMP biosynthesis; dUMP from dCTP (dUTP route): step 1/2.</text>
</comment>
<comment type="subunit">
    <text evidence="1">Homotrimer.</text>
</comment>
<comment type="similarity">
    <text evidence="1">Belongs to the dCTP deaminase family.</text>
</comment>
<dbReference type="EC" id="3.5.4.13" evidence="1"/>
<dbReference type="EMBL" id="CP000308">
    <property type="protein sequence ID" value="ABG12787.1"/>
    <property type="molecule type" value="Genomic_DNA"/>
</dbReference>
<dbReference type="RefSeq" id="WP_002211873.1">
    <property type="nucleotide sequence ID" value="NZ_CP009906.1"/>
</dbReference>
<dbReference type="SMR" id="Q1C9T5"/>
<dbReference type="GeneID" id="96665144"/>
<dbReference type="KEGG" id="ypa:YPA_0819"/>
<dbReference type="UniPathway" id="UPA00610">
    <property type="reaction ID" value="UER00665"/>
</dbReference>
<dbReference type="Proteomes" id="UP000001971">
    <property type="component" value="Chromosome"/>
</dbReference>
<dbReference type="GO" id="GO:0008829">
    <property type="term" value="F:dCTP deaminase activity"/>
    <property type="evidence" value="ECO:0007669"/>
    <property type="project" value="UniProtKB-UniRule"/>
</dbReference>
<dbReference type="GO" id="GO:0000166">
    <property type="term" value="F:nucleotide binding"/>
    <property type="evidence" value="ECO:0007669"/>
    <property type="project" value="UniProtKB-KW"/>
</dbReference>
<dbReference type="GO" id="GO:0006226">
    <property type="term" value="P:dUMP biosynthetic process"/>
    <property type="evidence" value="ECO:0007669"/>
    <property type="project" value="UniProtKB-UniPathway"/>
</dbReference>
<dbReference type="GO" id="GO:0006229">
    <property type="term" value="P:dUTP biosynthetic process"/>
    <property type="evidence" value="ECO:0007669"/>
    <property type="project" value="UniProtKB-UniRule"/>
</dbReference>
<dbReference type="GO" id="GO:0015949">
    <property type="term" value="P:nucleobase-containing small molecule interconversion"/>
    <property type="evidence" value="ECO:0007669"/>
    <property type="project" value="TreeGrafter"/>
</dbReference>
<dbReference type="CDD" id="cd07557">
    <property type="entry name" value="trimeric_dUTPase"/>
    <property type="match status" value="1"/>
</dbReference>
<dbReference type="FunFam" id="2.70.40.10:FF:000003">
    <property type="entry name" value="dCTP deaminase"/>
    <property type="match status" value="1"/>
</dbReference>
<dbReference type="Gene3D" id="2.70.40.10">
    <property type="match status" value="1"/>
</dbReference>
<dbReference type="HAMAP" id="MF_00146">
    <property type="entry name" value="dCTP_deaminase"/>
    <property type="match status" value="1"/>
</dbReference>
<dbReference type="InterPro" id="IPR011962">
    <property type="entry name" value="dCTP_deaminase"/>
</dbReference>
<dbReference type="InterPro" id="IPR036157">
    <property type="entry name" value="dUTPase-like_sf"/>
</dbReference>
<dbReference type="InterPro" id="IPR033704">
    <property type="entry name" value="dUTPase_trimeric"/>
</dbReference>
<dbReference type="NCBIfam" id="TIGR02274">
    <property type="entry name" value="dCTP_deam"/>
    <property type="match status" value="1"/>
</dbReference>
<dbReference type="PANTHER" id="PTHR42680">
    <property type="entry name" value="DCTP DEAMINASE"/>
    <property type="match status" value="1"/>
</dbReference>
<dbReference type="PANTHER" id="PTHR42680:SF3">
    <property type="entry name" value="DCTP DEAMINASE"/>
    <property type="match status" value="1"/>
</dbReference>
<dbReference type="Pfam" id="PF22769">
    <property type="entry name" value="DCD"/>
    <property type="match status" value="1"/>
</dbReference>
<dbReference type="SUPFAM" id="SSF51283">
    <property type="entry name" value="dUTPase-like"/>
    <property type="match status" value="1"/>
</dbReference>
<keyword id="KW-0378">Hydrolase</keyword>
<keyword id="KW-0546">Nucleotide metabolism</keyword>
<keyword id="KW-0547">Nucleotide-binding</keyword>
<feature type="chain" id="PRO_1000009834" description="dCTP deaminase">
    <location>
        <begin position="1"/>
        <end position="193"/>
    </location>
</feature>
<feature type="region of interest" description="Disordered" evidence="2">
    <location>
        <begin position="169"/>
        <end position="193"/>
    </location>
</feature>
<feature type="active site" description="Proton donor/acceptor" evidence="1">
    <location>
        <position position="138"/>
    </location>
</feature>
<feature type="binding site" evidence="1">
    <location>
        <begin position="110"/>
        <end position="115"/>
    </location>
    <ligand>
        <name>dCTP</name>
        <dbReference type="ChEBI" id="CHEBI:61481"/>
    </ligand>
</feature>
<feature type="binding site" evidence="1">
    <location>
        <position position="128"/>
    </location>
    <ligand>
        <name>dCTP</name>
        <dbReference type="ChEBI" id="CHEBI:61481"/>
    </ligand>
</feature>
<feature type="binding site" evidence="1">
    <location>
        <begin position="136"/>
        <end position="138"/>
    </location>
    <ligand>
        <name>dCTP</name>
        <dbReference type="ChEBI" id="CHEBI:61481"/>
    </ligand>
</feature>
<feature type="binding site" evidence="1">
    <location>
        <position position="171"/>
    </location>
    <ligand>
        <name>dCTP</name>
        <dbReference type="ChEBI" id="CHEBI:61481"/>
    </ligand>
</feature>
<feature type="binding site" evidence="1">
    <location>
        <position position="178"/>
    </location>
    <ligand>
        <name>dCTP</name>
        <dbReference type="ChEBI" id="CHEBI:61481"/>
    </ligand>
</feature>
<feature type="binding site" evidence="1">
    <location>
        <position position="182"/>
    </location>
    <ligand>
        <name>dCTP</name>
        <dbReference type="ChEBI" id="CHEBI:61481"/>
    </ligand>
</feature>
<reference key="1">
    <citation type="journal article" date="2006" name="J. Bacteriol.">
        <title>Complete genome sequence of Yersinia pestis strains Antiqua and Nepal516: evidence of gene reduction in an emerging pathogen.</title>
        <authorList>
            <person name="Chain P.S.G."/>
            <person name="Hu P."/>
            <person name="Malfatti S.A."/>
            <person name="Radnedge L."/>
            <person name="Larimer F."/>
            <person name="Vergez L.M."/>
            <person name="Worsham P."/>
            <person name="Chu M.C."/>
            <person name="Andersen G.L."/>
        </authorList>
    </citation>
    <scope>NUCLEOTIDE SEQUENCE [LARGE SCALE GENOMIC DNA]</scope>
    <source>
        <strain>Antiqua</strain>
    </source>
</reference>
<protein>
    <recommendedName>
        <fullName evidence="1">dCTP deaminase</fullName>
        <ecNumber evidence="1">3.5.4.13</ecNumber>
    </recommendedName>
    <alternativeName>
        <fullName evidence="1">Deoxycytidine triphosphate deaminase</fullName>
    </alternativeName>
</protein>
<proteinExistence type="inferred from homology"/>
<evidence type="ECO:0000255" key="1">
    <source>
        <dbReference type="HAMAP-Rule" id="MF_00146"/>
    </source>
</evidence>
<evidence type="ECO:0000256" key="2">
    <source>
        <dbReference type="SAM" id="MobiDB-lite"/>
    </source>
</evidence>